<feature type="chain" id="PRO_0000281457" description="tRNA/tmRNA (uracil-C(5))-methyltransferase">
    <location>
        <begin position="1"/>
        <end position="366"/>
    </location>
</feature>
<feature type="active site" description="Nucleophile" evidence="1">
    <location>
        <position position="324"/>
    </location>
</feature>
<feature type="active site" description="Proton acceptor" evidence="1">
    <location>
        <position position="358"/>
    </location>
</feature>
<feature type="binding site" evidence="1">
    <location>
        <position position="190"/>
    </location>
    <ligand>
        <name>S-adenosyl-L-methionine</name>
        <dbReference type="ChEBI" id="CHEBI:59789"/>
    </ligand>
</feature>
<feature type="binding site" evidence="1">
    <location>
        <position position="218"/>
    </location>
    <ligand>
        <name>S-adenosyl-L-methionine</name>
        <dbReference type="ChEBI" id="CHEBI:59789"/>
    </ligand>
</feature>
<feature type="binding site" evidence="1">
    <location>
        <position position="223"/>
    </location>
    <ligand>
        <name>S-adenosyl-L-methionine</name>
        <dbReference type="ChEBI" id="CHEBI:59789"/>
    </ligand>
</feature>
<feature type="binding site" evidence="1">
    <location>
        <position position="239"/>
    </location>
    <ligand>
        <name>S-adenosyl-L-methionine</name>
        <dbReference type="ChEBI" id="CHEBI:59789"/>
    </ligand>
</feature>
<feature type="binding site" evidence="1">
    <location>
        <position position="299"/>
    </location>
    <ligand>
        <name>S-adenosyl-L-methionine</name>
        <dbReference type="ChEBI" id="CHEBI:59789"/>
    </ligand>
</feature>
<dbReference type="EC" id="2.1.1.-" evidence="1"/>
<dbReference type="EC" id="2.1.1.35" evidence="1"/>
<dbReference type="EMBL" id="AE017220">
    <property type="protein sequence ID" value="AAX67924.1"/>
    <property type="molecule type" value="Genomic_DNA"/>
</dbReference>
<dbReference type="RefSeq" id="WP_000186981.1">
    <property type="nucleotide sequence ID" value="NC_006905.1"/>
</dbReference>
<dbReference type="SMR" id="Q57H88"/>
<dbReference type="KEGG" id="sec:SCH_4018"/>
<dbReference type="HOGENOM" id="CLU_043022_0_0_6"/>
<dbReference type="Proteomes" id="UP000000538">
    <property type="component" value="Chromosome"/>
</dbReference>
<dbReference type="GO" id="GO:0005829">
    <property type="term" value="C:cytosol"/>
    <property type="evidence" value="ECO:0007669"/>
    <property type="project" value="TreeGrafter"/>
</dbReference>
<dbReference type="GO" id="GO:0019843">
    <property type="term" value="F:rRNA binding"/>
    <property type="evidence" value="ECO:0007669"/>
    <property type="project" value="TreeGrafter"/>
</dbReference>
<dbReference type="GO" id="GO:0030697">
    <property type="term" value="F:tRNA (uracil(54)-C5)-methyltransferase activity, S-adenosyl methionine-dependent"/>
    <property type="evidence" value="ECO:0007669"/>
    <property type="project" value="UniProtKB-UniRule"/>
</dbReference>
<dbReference type="GO" id="GO:0000049">
    <property type="term" value="F:tRNA binding"/>
    <property type="evidence" value="ECO:0007669"/>
    <property type="project" value="TreeGrafter"/>
</dbReference>
<dbReference type="GO" id="GO:0030488">
    <property type="term" value="P:tRNA methylation"/>
    <property type="evidence" value="ECO:0007669"/>
    <property type="project" value="UniProtKB-UniRule"/>
</dbReference>
<dbReference type="CDD" id="cd02440">
    <property type="entry name" value="AdoMet_MTases"/>
    <property type="match status" value="1"/>
</dbReference>
<dbReference type="FunFam" id="2.40.50.1070:FF:000001">
    <property type="entry name" value="tRNA/tmRNA (uracil-C(5))-methyltransferase"/>
    <property type="match status" value="1"/>
</dbReference>
<dbReference type="FunFam" id="3.40.50.150:FF:000012">
    <property type="entry name" value="tRNA/tmRNA (uracil-C(5))-methyltransferase"/>
    <property type="match status" value="1"/>
</dbReference>
<dbReference type="Gene3D" id="2.40.50.1070">
    <property type="match status" value="1"/>
</dbReference>
<dbReference type="Gene3D" id="3.40.50.150">
    <property type="entry name" value="Vaccinia Virus protein VP39"/>
    <property type="match status" value="1"/>
</dbReference>
<dbReference type="HAMAP" id="MF_01011">
    <property type="entry name" value="RNA_methyltr_TrmA"/>
    <property type="match status" value="1"/>
</dbReference>
<dbReference type="InterPro" id="IPR030390">
    <property type="entry name" value="MeTrfase_TrmA_AS"/>
</dbReference>
<dbReference type="InterPro" id="IPR030391">
    <property type="entry name" value="MeTrfase_TrmA_CS"/>
</dbReference>
<dbReference type="InterPro" id="IPR029063">
    <property type="entry name" value="SAM-dependent_MTases_sf"/>
</dbReference>
<dbReference type="InterPro" id="IPR011869">
    <property type="entry name" value="TrmA_MeTrfase"/>
</dbReference>
<dbReference type="InterPro" id="IPR010280">
    <property type="entry name" value="U5_MeTrfase_fam"/>
</dbReference>
<dbReference type="NCBIfam" id="TIGR02143">
    <property type="entry name" value="trmA_only"/>
    <property type="match status" value="1"/>
</dbReference>
<dbReference type="PANTHER" id="PTHR47790">
    <property type="entry name" value="TRNA/TMRNA (URACIL-C(5))-METHYLTRANSFERASE"/>
    <property type="match status" value="1"/>
</dbReference>
<dbReference type="PANTHER" id="PTHR47790:SF2">
    <property type="entry name" value="TRNA_TMRNA (URACIL-C(5))-METHYLTRANSFERASE"/>
    <property type="match status" value="1"/>
</dbReference>
<dbReference type="Pfam" id="PF05958">
    <property type="entry name" value="tRNA_U5-meth_tr"/>
    <property type="match status" value="1"/>
</dbReference>
<dbReference type="SUPFAM" id="SSF53335">
    <property type="entry name" value="S-adenosyl-L-methionine-dependent methyltransferases"/>
    <property type="match status" value="1"/>
</dbReference>
<dbReference type="PROSITE" id="PS51687">
    <property type="entry name" value="SAM_MT_RNA_M5U"/>
    <property type="match status" value="1"/>
</dbReference>
<dbReference type="PROSITE" id="PS01230">
    <property type="entry name" value="TRMA_1"/>
    <property type="match status" value="1"/>
</dbReference>
<dbReference type="PROSITE" id="PS01231">
    <property type="entry name" value="TRMA_2"/>
    <property type="match status" value="1"/>
</dbReference>
<proteinExistence type="inferred from homology"/>
<accession>Q57H88</accession>
<protein>
    <recommendedName>
        <fullName evidence="1">tRNA/tmRNA (uracil-C(5))-methyltransferase</fullName>
        <ecNumber evidence="1">2.1.1.-</ecNumber>
        <ecNumber evidence="1">2.1.1.35</ecNumber>
    </recommendedName>
    <alternativeName>
        <fullName evidence="1">tRNA (uracil(54)-C(5))-methyltransferase</fullName>
    </alternativeName>
    <alternativeName>
        <fullName evidence="1">tRNA(m5U54)-methyltransferase</fullName>
        <shortName evidence="1">RUMT</shortName>
    </alternativeName>
    <alternativeName>
        <fullName evidence="1">tmRNA (uracil(341)-C(5))-methyltransferase</fullName>
    </alternativeName>
</protein>
<organism>
    <name type="scientific">Salmonella choleraesuis (strain SC-B67)</name>
    <dbReference type="NCBI Taxonomy" id="321314"/>
    <lineage>
        <taxon>Bacteria</taxon>
        <taxon>Pseudomonadati</taxon>
        <taxon>Pseudomonadota</taxon>
        <taxon>Gammaproteobacteria</taxon>
        <taxon>Enterobacterales</taxon>
        <taxon>Enterobacteriaceae</taxon>
        <taxon>Salmonella</taxon>
    </lineage>
</organism>
<reference key="1">
    <citation type="journal article" date="2005" name="Nucleic Acids Res.">
        <title>The genome sequence of Salmonella enterica serovar Choleraesuis, a highly invasive and resistant zoonotic pathogen.</title>
        <authorList>
            <person name="Chiu C.-H."/>
            <person name="Tang P."/>
            <person name="Chu C."/>
            <person name="Hu S."/>
            <person name="Bao Q."/>
            <person name="Yu J."/>
            <person name="Chou Y.-Y."/>
            <person name="Wang H.-S."/>
            <person name="Lee Y.-S."/>
        </authorList>
    </citation>
    <scope>NUCLEOTIDE SEQUENCE [LARGE SCALE GENOMIC DNA]</scope>
    <source>
        <strain>SC-B67</strain>
    </source>
</reference>
<evidence type="ECO:0000255" key="1">
    <source>
        <dbReference type="HAMAP-Rule" id="MF_01011"/>
    </source>
</evidence>
<name>TRMA_SALCH</name>
<gene>
    <name evidence="1" type="primary">trmA</name>
    <name type="ordered locus">SCH_4018</name>
</gene>
<comment type="function">
    <text evidence="1">Dual-specificity methyltransferase that catalyzes the formation of 5-methyluridine at position 54 (m5U54) in all tRNAs, and that of position 341 (m5U341) in tmRNA (transfer-mRNA).</text>
</comment>
<comment type="catalytic activity">
    <reaction evidence="1">
        <text>uridine(54) in tRNA + S-adenosyl-L-methionine = 5-methyluridine(54) in tRNA + S-adenosyl-L-homocysteine + H(+)</text>
        <dbReference type="Rhea" id="RHEA:42712"/>
        <dbReference type="Rhea" id="RHEA-COMP:10167"/>
        <dbReference type="Rhea" id="RHEA-COMP:10193"/>
        <dbReference type="ChEBI" id="CHEBI:15378"/>
        <dbReference type="ChEBI" id="CHEBI:57856"/>
        <dbReference type="ChEBI" id="CHEBI:59789"/>
        <dbReference type="ChEBI" id="CHEBI:65315"/>
        <dbReference type="ChEBI" id="CHEBI:74447"/>
        <dbReference type="EC" id="2.1.1.35"/>
    </reaction>
</comment>
<comment type="catalytic activity">
    <reaction evidence="1">
        <text>uridine(341) in tmRNA + S-adenosyl-L-methionine = 5-methyluridine(341) in tmRNA + S-adenosyl-L-homocysteine + H(+)</text>
        <dbReference type="Rhea" id="RHEA:43612"/>
        <dbReference type="Rhea" id="RHEA-COMP:10630"/>
        <dbReference type="Rhea" id="RHEA-COMP:10631"/>
        <dbReference type="ChEBI" id="CHEBI:15378"/>
        <dbReference type="ChEBI" id="CHEBI:57856"/>
        <dbReference type="ChEBI" id="CHEBI:59789"/>
        <dbReference type="ChEBI" id="CHEBI:65315"/>
        <dbReference type="ChEBI" id="CHEBI:74447"/>
    </reaction>
</comment>
<comment type="similarity">
    <text evidence="1">Belongs to the class I-like SAM-binding methyltransferase superfamily. RNA M5U methyltransferase family. TrmA subfamily.</text>
</comment>
<sequence length="366" mass="41896">MTPEHLPTEQYEAQLAEKVARLQSMMAPFSGLVPEVFRSPVSHYRMRAEFRLWHDGDDLYHIMFDQQTKSRIRVDTFPAASQLINTLMKAMIAGVRDNHALRHKLFQIDYLTTLSNQAVVSLLYHKKLDEEWREAATALRDALRAQGLNVHLIGRATKTKIELDQDYIDERLPVAGKEMIYRQVENSFTQPNAAMNIQMLEWALEVTKDSKGDLLELYCGNGNFSLALARNFNRVLATEIAKPSVAAAQYNIAANHIDNVQIIRMAAEEFTQAMNGVREFNRLQGIDLKRYQCETIFVDPPRSGLDSETEKMVQAYPRILYISCNPETLCKNLETLSQTHTVSRLALFDQFPYTHHMECGVLLTAR</sequence>
<keyword id="KW-0489">Methyltransferase</keyword>
<keyword id="KW-0949">S-adenosyl-L-methionine</keyword>
<keyword id="KW-0808">Transferase</keyword>
<keyword id="KW-0819">tRNA processing</keyword>